<reference key="1">
    <citation type="journal article" date="2008" name="J. Biotechnol.">
        <title>Ultrafast pyrosequencing of Corynebacterium kroppenstedtii DSM44385 revealed insights into the physiology of a lipophilic corynebacterium that lacks mycolic acids.</title>
        <authorList>
            <person name="Tauch A."/>
            <person name="Schneider J."/>
            <person name="Szczepanowski R."/>
            <person name="Tilker A."/>
            <person name="Viehoever P."/>
            <person name="Gartemann K.-H."/>
            <person name="Arnold W."/>
            <person name="Blom J."/>
            <person name="Brinkrolf K."/>
            <person name="Brune I."/>
            <person name="Goetker S."/>
            <person name="Weisshaar B."/>
            <person name="Goesmann A."/>
            <person name="Droege M."/>
            <person name="Puehler A."/>
        </authorList>
    </citation>
    <scope>NUCLEOTIDE SEQUENCE [LARGE SCALE GENOMIC DNA]</scope>
    <source>
        <strain>DSM 44385 / JCM 11950 / CIP 105744 / CCUG 35717</strain>
    </source>
</reference>
<organism>
    <name type="scientific">Corynebacterium kroppenstedtii (strain DSM 44385 / JCM 11950 / CIP 105744 / CCUG 35717)</name>
    <dbReference type="NCBI Taxonomy" id="645127"/>
    <lineage>
        <taxon>Bacteria</taxon>
        <taxon>Bacillati</taxon>
        <taxon>Actinomycetota</taxon>
        <taxon>Actinomycetes</taxon>
        <taxon>Mycobacteriales</taxon>
        <taxon>Corynebacteriaceae</taxon>
        <taxon>Corynebacterium</taxon>
    </lineage>
</organism>
<sequence length="113" mass="12956">MNILDKVDAASLRDDIPEFRSGDTVDVHVKVIEGQKSRIQVFRGVVIRRQGSGVRETFTVRKVSFGIGVERTFPVHTPNIDHIEVLTRGDVRRAKLYYLRNLRGKAAKIKERR</sequence>
<proteinExistence type="inferred from homology"/>
<evidence type="ECO:0000255" key="1">
    <source>
        <dbReference type="HAMAP-Rule" id="MF_00402"/>
    </source>
</evidence>
<evidence type="ECO:0000305" key="2"/>
<comment type="function">
    <text evidence="1">This protein is located at the 30S-50S ribosomal subunit interface and may play a role in the structure and function of the aminoacyl-tRNA binding site.</text>
</comment>
<comment type="similarity">
    <text evidence="1">Belongs to the bacterial ribosomal protein bL19 family.</text>
</comment>
<accession>C4LJB9</accession>
<keyword id="KW-1185">Reference proteome</keyword>
<keyword id="KW-0687">Ribonucleoprotein</keyword>
<keyword id="KW-0689">Ribosomal protein</keyword>
<feature type="chain" id="PRO_1000205884" description="Large ribosomal subunit protein bL19">
    <location>
        <begin position="1"/>
        <end position="113"/>
    </location>
</feature>
<name>RL19_CORK4</name>
<gene>
    <name evidence="1" type="primary">rplS</name>
    <name type="ordered locus">ckrop_1179</name>
</gene>
<dbReference type="EMBL" id="CP001620">
    <property type="protein sequence ID" value="ACR17924.1"/>
    <property type="molecule type" value="Genomic_DNA"/>
</dbReference>
<dbReference type="RefSeq" id="WP_012731811.1">
    <property type="nucleotide sequence ID" value="NC_012704.1"/>
</dbReference>
<dbReference type="SMR" id="C4LJB9"/>
<dbReference type="STRING" id="645127.ckrop_1179"/>
<dbReference type="KEGG" id="ckp:ckrop_1179"/>
<dbReference type="eggNOG" id="COG0335">
    <property type="taxonomic scope" value="Bacteria"/>
</dbReference>
<dbReference type="HOGENOM" id="CLU_103507_2_1_11"/>
<dbReference type="OrthoDB" id="9803541at2"/>
<dbReference type="Proteomes" id="UP000001473">
    <property type="component" value="Chromosome"/>
</dbReference>
<dbReference type="GO" id="GO:0022625">
    <property type="term" value="C:cytosolic large ribosomal subunit"/>
    <property type="evidence" value="ECO:0007669"/>
    <property type="project" value="TreeGrafter"/>
</dbReference>
<dbReference type="GO" id="GO:0003735">
    <property type="term" value="F:structural constituent of ribosome"/>
    <property type="evidence" value="ECO:0007669"/>
    <property type="project" value="InterPro"/>
</dbReference>
<dbReference type="GO" id="GO:0006412">
    <property type="term" value="P:translation"/>
    <property type="evidence" value="ECO:0007669"/>
    <property type="project" value="UniProtKB-UniRule"/>
</dbReference>
<dbReference type="FunFam" id="2.30.30.790:FF:000001">
    <property type="entry name" value="50S ribosomal protein L19"/>
    <property type="match status" value="1"/>
</dbReference>
<dbReference type="Gene3D" id="2.30.30.790">
    <property type="match status" value="1"/>
</dbReference>
<dbReference type="HAMAP" id="MF_00402">
    <property type="entry name" value="Ribosomal_bL19"/>
    <property type="match status" value="1"/>
</dbReference>
<dbReference type="InterPro" id="IPR001857">
    <property type="entry name" value="Ribosomal_bL19"/>
</dbReference>
<dbReference type="InterPro" id="IPR018257">
    <property type="entry name" value="Ribosomal_bL19_CS"/>
</dbReference>
<dbReference type="InterPro" id="IPR038657">
    <property type="entry name" value="Ribosomal_bL19_sf"/>
</dbReference>
<dbReference type="InterPro" id="IPR008991">
    <property type="entry name" value="Translation_prot_SH3-like_sf"/>
</dbReference>
<dbReference type="NCBIfam" id="TIGR01024">
    <property type="entry name" value="rplS_bact"/>
    <property type="match status" value="1"/>
</dbReference>
<dbReference type="PANTHER" id="PTHR15680:SF9">
    <property type="entry name" value="LARGE RIBOSOMAL SUBUNIT PROTEIN BL19M"/>
    <property type="match status" value="1"/>
</dbReference>
<dbReference type="PANTHER" id="PTHR15680">
    <property type="entry name" value="RIBOSOMAL PROTEIN L19"/>
    <property type="match status" value="1"/>
</dbReference>
<dbReference type="Pfam" id="PF01245">
    <property type="entry name" value="Ribosomal_L19"/>
    <property type="match status" value="1"/>
</dbReference>
<dbReference type="PIRSF" id="PIRSF002191">
    <property type="entry name" value="Ribosomal_L19"/>
    <property type="match status" value="1"/>
</dbReference>
<dbReference type="PRINTS" id="PR00061">
    <property type="entry name" value="RIBOSOMALL19"/>
</dbReference>
<dbReference type="SUPFAM" id="SSF50104">
    <property type="entry name" value="Translation proteins SH3-like domain"/>
    <property type="match status" value="1"/>
</dbReference>
<dbReference type="PROSITE" id="PS01015">
    <property type="entry name" value="RIBOSOMAL_L19"/>
    <property type="match status" value="1"/>
</dbReference>
<protein>
    <recommendedName>
        <fullName evidence="1">Large ribosomal subunit protein bL19</fullName>
    </recommendedName>
    <alternativeName>
        <fullName evidence="2">50S ribosomal protein L19</fullName>
    </alternativeName>
</protein>